<organism>
    <name type="scientific">Campylobacter fetus subsp. fetus (strain 82-40)</name>
    <dbReference type="NCBI Taxonomy" id="360106"/>
    <lineage>
        <taxon>Bacteria</taxon>
        <taxon>Pseudomonadati</taxon>
        <taxon>Campylobacterota</taxon>
        <taxon>Epsilonproteobacteria</taxon>
        <taxon>Campylobacterales</taxon>
        <taxon>Campylobacteraceae</taxon>
        <taxon>Campylobacter</taxon>
    </lineage>
</organism>
<gene>
    <name evidence="1" type="primary">rpsS</name>
    <name type="ordered locus">CFF8240_0038</name>
</gene>
<feature type="chain" id="PRO_1000051030" description="Small ribosomal subunit protein uS19">
    <location>
        <begin position="1"/>
        <end position="93"/>
    </location>
</feature>
<protein>
    <recommendedName>
        <fullName evidence="1">Small ribosomal subunit protein uS19</fullName>
    </recommendedName>
    <alternativeName>
        <fullName evidence="2">30S ribosomal protein S19</fullName>
    </alternativeName>
</protein>
<proteinExistence type="inferred from homology"/>
<comment type="function">
    <text evidence="1">Protein S19 forms a complex with S13 that binds strongly to the 16S ribosomal RNA.</text>
</comment>
<comment type="similarity">
    <text evidence="1">Belongs to the universal ribosomal protein uS19 family.</text>
</comment>
<dbReference type="EMBL" id="CP000487">
    <property type="protein sequence ID" value="ABK81869.1"/>
    <property type="molecule type" value="Genomic_DNA"/>
</dbReference>
<dbReference type="RefSeq" id="WP_002847965.1">
    <property type="nucleotide sequence ID" value="NC_008599.1"/>
</dbReference>
<dbReference type="SMR" id="A0RM15"/>
<dbReference type="GeneID" id="61063881"/>
<dbReference type="KEGG" id="cff:CFF8240_0038"/>
<dbReference type="eggNOG" id="COG0185">
    <property type="taxonomic scope" value="Bacteria"/>
</dbReference>
<dbReference type="HOGENOM" id="CLU_144911_0_1_7"/>
<dbReference type="Proteomes" id="UP000000760">
    <property type="component" value="Chromosome"/>
</dbReference>
<dbReference type="GO" id="GO:0005737">
    <property type="term" value="C:cytoplasm"/>
    <property type="evidence" value="ECO:0007669"/>
    <property type="project" value="UniProtKB-ARBA"/>
</dbReference>
<dbReference type="GO" id="GO:0015935">
    <property type="term" value="C:small ribosomal subunit"/>
    <property type="evidence" value="ECO:0007669"/>
    <property type="project" value="InterPro"/>
</dbReference>
<dbReference type="GO" id="GO:0019843">
    <property type="term" value="F:rRNA binding"/>
    <property type="evidence" value="ECO:0007669"/>
    <property type="project" value="UniProtKB-UniRule"/>
</dbReference>
<dbReference type="GO" id="GO:0003735">
    <property type="term" value="F:structural constituent of ribosome"/>
    <property type="evidence" value="ECO:0007669"/>
    <property type="project" value="InterPro"/>
</dbReference>
<dbReference type="GO" id="GO:0000028">
    <property type="term" value="P:ribosomal small subunit assembly"/>
    <property type="evidence" value="ECO:0007669"/>
    <property type="project" value="TreeGrafter"/>
</dbReference>
<dbReference type="GO" id="GO:0006412">
    <property type="term" value="P:translation"/>
    <property type="evidence" value="ECO:0007669"/>
    <property type="project" value="UniProtKB-UniRule"/>
</dbReference>
<dbReference type="FunFam" id="3.30.860.10:FF:000001">
    <property type="entry name" value="30S ribosomal protein S19"/>
    <property type="match status" value="1"/>
</dbReference>
<dbReference type="Gene3D" id="3.30.860.10">
    <property type="entry name" value="30s Ribosomal Protein S19, Chain A"/>
    <property type="match status" value="1"/>
</dbReference>
<dbReference type="HAMAP" id="MF_00531">
    <property type="entry name" value="Ribosomal_uS19"/>
    <property type="match status" value="1"/>
</dbReference>
<dbReference type="InterPro" id="IPR002222">
    <property type="entry name" value="Ribosomal_uS19"/>
</dbReference>
<dbReference type="InterPro" id="IPR005732">
    <property type="entry name" value="Ribosomal_uS19_bac-type"/>
</dbReference>
<dbReference type="InterPro" id="IPR020934">
    <property type="entry name" value="Ribosomal_uS19_CS"/>
</dbReference>
<dbReference type="InterPro" id="IPR023575">
    <property type="entry name" value="Ribosomal_uS19_SF"/>
</dbReference>
<dbReference type="NCBIfam" id="TIGR01050">
    <property type="entry name" value="rpsS_bact"/>
    <property type="match status" value="1"/>
</dbReference>
<dbReference type="PANTHER" id="PTHR11880">
    <property type="entry name" value="RIBOSOMAL PROTEIN S19P FAMILY MEMBER"/>
    <property type="match status" value="1"/>
</dbReference>
<dbReference type="PANTHER" id="PTHR11880:SF8">
    <property type="entry name" value="SMALL RIBOSOMAL SUBUNIT PROTEIN US19M"/>
    <property type="match status" value="1"/>
</dbReference>
<dbReference type="Pfam" id="PF00203">
    <property type="entry name" value="Ribosomal_S19"/>
    <property type="match status" value="1"/>
</dbReference>
<dbReference type="PIRSF" id="PIRSF002144">
    <property type="entry name" value="Ribosomal_S19"/>
    <property type="match status" value="1"/>
</dbReference>
<dbReference type="PRINTS" id="PR00975">
    <property type="entry name" value="RIBOSOMALS19"/>
</dbReference>
<dbReference type="SUPFAM" id="SSF54570">
    <property type="entry name" value="Ribosomal protein S19"/>
    <property type="match status" value="1"/>
</dbReference>
<dbReference type="PROSITE" id="PS00323">
    <property type="entry name" value="RIBOSOMAL_S19"/>
    <property type="match status" value="1"/>
</dbReference>
<accession>A0RM15</accession>
<keyword id="KW-0687">Ribonucleoprotein</keyword>
<keyword id="KW-0689">Ribosomal protein</keyword>
<keyword id="KW-0694">RNA-binding</keyword>
<keyword id="KW-0699">rRNA-binding</keyword>
<evidence type="ECO:0000255" key="1">
    <source>
        <dbReference type="HAMAP-Rule" id="MF_00531"/>
    </source>
</evidence>
<evidence type="ECO:0000305" key="2"/>
<sequence length="93" mass="10408">MARSLKKGPFVDDHVMKKVLAAKAANDNKPIKTWSRRSMIIPEMIGLTFNVHNGKGFIPVYVTENHIGYKLGEFAPTRTFKGHKGSVQKKIGK</sequence>
<name>RS19_CAMFF</name>
<reference key="1">
    <citation type="submission" date="2006-11" db="EMBL/GenBank/DDBJ databases">
        <title>Sequence of Campylobacter fetus subsp. fetus 82-40.</title>
        <authorList>
            <person name="Fouts D.E."/>
            <person name="Nelson K.E."/>
        </authorList>
    </citation>
    <scope>NUCLEOTIDE SEQUENCE [LARGE SCALE GENOMIC DNA]</scope>
    <source>
        <strain>82-40</strain>
    </source>
</reference>